<comment type="function">
    <text evidence="1">Catalyzes the transfer of a dimethylallyl group onto the adenine at position 37 in tRNAs that read codons beginning with uridine, leading to the formation of N6-(dimethylallyl)adenosine (i(6)A).</text>
</comment>
<comment type="catalytic activity">
    <reaction evidence="1">
        <text>adenosine(37) in tRNA + dimethylallyl diphosphate = N(6)-dimethylallyladenosine(37) in tRNA + diphosphate</text>
        <dbReference type="Rhea" id="RHEA:26482"/>
        <dbReference type="Rhea" id="RHEA-COMP:10162"/>
        <dbReference type="Rhea" id="RHEA-COMP:10375"/>
        <dbReference type="ChEBI" id="CHEBI:33019"/>
        <dbReference type="ChEBI" id="CHEBI:57623"/>
        <dbReference type="ChEBI" id="CHEBI:74411"/>
        <dbReference type="ChEBI" id="CHEBI:74415"/>
        <dbReference type="EC" id="2.5.1.75"/>
    </reaction>
</comment>
<comment type="cofactor">
    <cofactor evidence="1">
        <name>Mg(2+)</name>
        <dbReference type="ChEBI" id="CHEBI:18420"/>
    </cofactor>
</comment>
<comment type="subunit">
    <text evidence="1">Monomer.</text>
</comment>
<comment type="similarity">
    <text evidence="1">Belongs to the IPP transferase family.</text>
</comment>
<gene>
    <name evidence="1" type="primary">miaA</name>
    <name type="ordered locus">LEUM_1699</name>
</gene>
<evidence type="ECO:0000255" key="1">
    <source>
        <dbReference type="HAMAP-Rule" id="MF_00185"/>
    </source>
</evidence>
<name>MIAA_LEUMM</name>
<proteinExistence type="inferred from homology"/>
<organism>
    <name type="scientific">Leuconostoc mesenteroides subsp. mesenteroides (strain ATCC 8293 / DSM 20343 / BCRC 11652 / CCM 1803 / JCM 6124 / NCDO 523 / NBRC 100496 / NCIMB 8023 / NCTC 12954 / NRRL B-1118 / 37Y)</name>
    <dbReference type="NCBI Taxonomy" id="203120"/>
    <lineage>
        <taxon>Bacteria</taxon>
        <taxon>Bacillati</taxon>
        <taxon>Bacillota</taxon>
        <taxon>Bacilli</taxon>
        <taxon>Lactobacillales</taxon>
        <taxon>Lactobacillaceae</taxon>
        <taxon>Leuconostoc</taxon>
    </lineage>
</organism>
<reference key="1">
    <citation type="journal article" date="2006" name="Proc. Natl. Acad. Sci. U.S.A.">
        <title>Comparative genomics of the lactic acid bacteria.</title>
        <authorList>
            <person name="Makarova K.S."/>
            <person name="Slesarev A."/>
            <person name="Wolf Y.I."/>
            <person name="Sorokin A."/>
            <person name="Mirkin B."/>
            <person name="Koonin E.V."/>
            <person name="Pavlov A."/>
            <person name="Pavlova N."/>
            <person name="Karamychev V."/>
            <person name="Polouchine N."/>
            <person name="Shakhova V."/>
            <person name="Grigoriev I."/>
            <person name="Lou Y."/>
            <person name="Rohksar D."/>
            <person name="Lucas S."/>
            <person name="Huang K."/>
            <person name="Goodstein D.M."/>
            <person name="Hawkins T."/>
            <person name="Plengvidhya V."/>
            <person name="Welker D."/>
            <person name="Hughes J."/>
            <person name="Goh Y."/>
            <person name="Benson A."/>
            <person name="Baldwin K."/>
            <person name="Lee J.-H."/>
            <person name="Diaz-Muniz I."/>
            <person name="Dosti B."/>
            <person name="Smeianov V."/>
            <person name="Wechter W."/>
            <person name="Barabote R."/>
            <person name="Lorca G."/>
            <person name="Altermann E."/>
            <person name="Barrangou R."/>
            <person name="Ganesan B."/>
            <person name="Xie Y."/>
            <person name="Rawsthorne H."/>
            <person name="Tamir D."/>
            <person name="Parker C."/>
            <person name="Breidt F."/>
            <person name="Broadbent J.R."/>
            <person name="Hutkins R."/>
            <person name="O'Sullivan D."/>
            <person name="Steele J."/>
            <person name="Unlu G."/>
            <person name="Saier M.H. Jr."/>
            <person name="Klaenhammer T."/>
            <person name="Richardson P."/>
            <person name="Kozyavkin S."/>
            <person name="Weimer B.C."/>
            <person name="Mills D.A."/>
        </authorList>
    </citation>
    <scope>NUCLEOTIDE SEQUENCE [LARGE SCALE GENOMIC DNA]</scope>
    <source>
        <strain>ATCC 8293 / DSM 20343 / BCRC 11652 / CCM 1803 / JCM 6124 / NCDO 523 / NBRC 100496 / NCIMB 8023 / NCTC 12954 / NRRL B-1118 / 37Y</strain>
    </source>
</reference>
<keyword id="KW-0067">ATP-binding</keyword>
<keyword id="KW-0460">Magnesium</keyword>
<keyword id="KW-0547">Nucleotide-binding</keyword>
<keyword id="KW-1185">Reference proteome</keyword>
<keyword id="KW-0808">Transferase</keyword>
<keyword id="KW-0819">tRNA processing</keyword>
<sequence length="297" mass="33469">MNKIVVLTGPTASGKSSLSIQMAQRLNGEIVSADSMQIYRNLDVGTAKVTKEEQNIVPHHLIDIVDLTANYSVGDFIIAADKVIADIISRGKLPIIVGGTGLYVKALLGFQELEYAASDTEEVHKLNAYELDKLVVELKSLDINRAQKVDLKNKQRVIRAIQIAKYGKKDAKLTQRPKYDALVIGLDWPRELLYERINHRVTQMVQDGVLKEAQTILDAGGEKLQSGKAIGYKEFFPYLRDQVTLDKAINQLQQDSRRYAKRQLTYLRHQIPGLVWLKGQTAELRLTEMIEGWLSLK</sequence>
<dbReference type="EC" id="2.5.1.75" evidence="1"/>
<dbReference type="EMBL" id="CP000414">
    <property type="protein sequence ID" value="ABJ62790.1"/>
    <property type="molecule type" value="Genomic_DNA"/>
</dbReference>
<dbReference type="RefSeq" id="WP_011680315.1">
    <property type="nucleotide sequence ID" value="NC_008531.1"/>
</dbReference>
<dbReference type="SMR" id="Q03VI2"/>
<dbReference type="EnsemblBacteria" id="ABJ62790">
    <property type="protein sequence ID" value="ABJ62790"/>
    <property type="gene ID" value="LEUM_1699"/>
</dbReference>
<dbReference type="GeneID" id="29577696"/>
<dbReference type="KEGG" id="lme:LEUM_1699"/>
<dbReference type="eggNOG" id="COG0324">
    <property type="taxonomic scope" value="Bacteria"/>
</dbReference>
<dbReference type="HOGENOM" id="CLU_032616_0_1_9"/>
<dbReference type="Proteomes" id="UP000000362">
    <property type="component" value="Chromosome"/>
</dbReference>
<dbReference type="GO" id="GO:0005524">
    <property type="term" value="F:ATP binding"/>
    <property type="evidence" value="ECO:0007669"/>
    <property type="project" value="UniProtKB-UniRule"/>
</dbReference>
<dbReference type="GO" id="GO:0052381">
    <property type="term" value="F:tRNA dimethylallyltransferase activity"/>
    <property type="evidence" value="ECO:0007669"/>
    <property type="project" value="UniProtKB-UniRule"/>
</dbReference>
<dbReference type="GO" id="GO:0006400">
    <property type="term" value="P:tRNA modification"/>
    <property type="evidence" value="ECO:0007669"/>
    <property type="project" value="TreeGrafter"/>
</dbReference>
<dbReference type="Gene3D" id="1.10.20.140">
    <property type="match status" value="1"/>
</dbReference>
<dbReference type="Gene3D" id="3.40.50.300">
    <property type="entry name" value="P-loop containing nucleotide triphosphate hydrolases"/>
    <property type="match status" value="1"/>
</dbReference>
<dbReference type="HAMAP" id="MF_00185">
    <property type="entry name" value="IPP_trans"/>
    <property type="match status" value="1"/>
</dbReference>
<dbReference type="InterPro" id="IPR039657">
    <property type="entry name" value="Dimethylallyltransferase"/>
</dbReference>
<dbReference type="InterPro" id="IPR018022">
    <property type="entry name" value="IPT"/>
</dbReference>
<dbReference type="InterPro" id="IPR027417">
    <property type="entry name" value="P-loop_NTPase"/>
</dbReference>
<dbReference type="NCBIfam" id="TIGR00174">
    <property type="entry name" value="miaA"/>
    <property type="match status" value="1"/>
</dbReference>
<dbReference type="PANTHER" id="PTHR11088">
    <property type="entry name" value="TRNA DIMETHYLALLYLTRANSFERASE"/>
    <property type="match status" value="1"/>
</dbReference>
<dbReference type="PANTHER" id="PTHR11088:SF60">
    <property type="entry name" value="TRNA DIMETHYLALLYLTRANSFERASE"/>
    <property type="match status" value="1"/>
</dbReference>
<dbReference type="Pfam" id="PF01715">
    <property type="entry name" value="IPPT"/>
    <property type="match status" value="1"/>
</dbReference>
<dbReference type="SUPFAM" id="SSF52540">
    <property type="entry name" value="P-loop containing nucleoside triphosphate hydrolases"/>
    <property type="match status" value="2"/>
</dbReference>
<protein>
    <recommendedName>
        <fullName evidence="1">tRNA dimethylallyltransferase</fullName>
        <ecNumber evidence="1">2.5.1.75</ecNumber>
    </recommendedName>
    <alternativeName>
        <fullName evidence="1">Dimethylallyl diphosphate:tRNA dimethylallyltransferase</fullName>
        <shortName evidence="1">DMAPP:tRNA dimethylallyltransferase</shortName>
        <shortName evidence="1">DMATase</shortName>
    </alternativeName>
    <alternativeName>
        <fullName evidence="1">Isopentenyl-diphosphate:tRNA isopentenyltransferase</fullName>
        <shortName evidence="1">IPP transferase</shortName>
        <shortName evidence="1">IPPT</shortName>
        <shortName evidence="1">IPTase</shortName>
    </alternativeName>
</protein>
<accession>Q03VI2</accession>
<feature type="chain" id="PRO_1000020618" description="tRNA dimethylallyltransferase">
    <location>
        <begin position="1"/>
        <end position="297"/>
    </location>
</feature>
<feature type="region of interest" description="Interaction with substrate tRNA" evidence="1">
    <location>
        <begin position="34"/>
        <end position="37"/>
    </location>
</feature>
<feature type="region of interest" description="Interaction with substrate tRNA" evidence="1">
    <location>
        <begin position="155"/>
        <end position="159"/>
    </location>
</feature>
<feature type="binding site" evidence="1">
    <location>
        <begin position="9"/>
        <end position="16"/>
    </location>
    <ligand>
        <name>ATP</name>
        <dbReference type="ChEBI" id="CHEBI:30616"/>
    </ligand>
</feature>
<feature type="binding site" evidence="1">
    <location>
        <begin position="11"/>
        <end position="16"/>
    </location>
    <ligand>
        <name>substrate</name>
    </ligand>
</feature>
<feature type="site" description="Interaction with substrate tRNA" evidence="1">
    <location>
        <position position="100"/>
    </location>
</feature>